<sequence>MTDKITFNDLGLPEFILKAVSDLGFETPSPIQQSCIPHLLNGNDVLGMAQTGSGKTAAFALPLLAQIDPSEKHPQMLVMAPTRELAIQVADACELFVKYAQGTRIVTLYGGQRYDIQLRALKQGAQVVVGTPGRILDHIRRGTLNLSELRFIVLDEADEMLRMGFIDDVETVMAELPENHQTALFSATMPEPIRRITKRFMNDPQEVKIKVNNENAPDIDQSCWYVHGVRKNEALLRFLEVEDFDAAIIFARTKTGTLDITELLEKNGFRSAALNGDMTQQLREQTLDRLRNGSLDIVVATDVAARGIDIERISLVVNYDIPLDAESYVHRIGRTGRAGRSGRALLFVEPRERRLLRNIEHLMKKGINEVELPNHLVLQECRRKKFVAKITKQLEHHDLEQYRSLLEDLFTADQDQENIAAAMLMLLQGKQKLILPPDPPMEKRRRERNDRGDRRENPRSAERRGERKGYGNPQPMDLYRIEVGRADGVEVRHIVGAIANEGDINSRYIGHIKLYDDYTTVELPQGMPKELLQQFAKTRVLNKQMQMSFLGAVKSDNSRGSDDFNGKRKGRGGDFRGERGRERGNDNRGNRKFNEKSNRTFSDKPRRDRRSSF</sequence>
<keyword id="KW-0067">ATP-binding</keyword>
<keyword id="KW-0963">Cytoplasm</keyword>
<keyword id="KW-0347">Helicase</keyword>
<keyword id="KW-0378">Hydrolase</keyword>
<keyword id="KW-0547">Nucleotide-binding</keyword>
<keyword id="KW-1185">Reference proteome</keyword>
<keyword id="KW-0694">RNA-binding</keyword>
<keyword id="KW-0346">Stress response</keyword>
<name>DEAD_HAEIN</name>
<organism>
    <name type="scientific">Haemophilus influenzae (strain ATCC 51907 / DSM 11121 / KW20 / Rd)</name>
    <dbReference type="NCBI Taxonomy" id="71421"/>
    <lineage>
        <taxon>Bacteria</taxon>
        <taxon>Pseudomonadati</taxon>
        <taxon>Pseudomonadota</taxon>
        <taxon>Gammaproteobacteria</taxon>
        <taxon>Pasteurellales</taxon>
        <taxon>Pasteurellaceae</taxon>
        <taxon>Haemophilus</taxon>
    </lineage>
</organism>
<evidence type="ECO:0000255" key="1">
    <source>
        <dbReference type="HAMAP-Rule" id="MF_00964"/>
    </source>
</evidence>
<evidence type="ECO:0000256" key="2">
    <source>
        <dbReference type="SAM" id="MobiDB-lite"/>
    </source>
</evidence>
<accession>P44586</accession>
<reference key="1">
    <citation type="journal article" date="1995" name="Science">
        <title>Whole-genome random sequencing and assembly of Haemophilus influenzae Rd.</title>
        <authorList>
            <person name="Fleischmann R.D."/>
            <person name="Adams M.D."/>
            <person name="White O."/>
            <person name="Clayton R.A."/>
            <person name="Kirkness E.F."/>
            <person name="Kerlavage A.R."/>
            <person name="Bult C.J."/>
            <person name="Tomb J.-F."/>
            <person name="Dougherty B.A."/>
            <person name="Merrick J.M."/>
            <person name="McKenney K."/>
            <person name="Sutton G.G."/>
            <person name="FitzHugh W."/>
            <person name="Fields C.A."/>
            <person name="Gocayne J.D."/>
            <person name="Scott J.D."/>
            <person name="Shirley R."/>
            <person name="Liu L.-I."/>
            <person name="Glodek A."/>
            <person name="Kelley J.M."/>
            <person name="Weidman J.F."/>
            <person name="Phillips C.A."/>
            <person name="Spriggs T."/>
            <person name="Hedblom E."/>
            <person name="Cotton M.D."/>
            <person name="Utterback T.R."/>
            <person name="Hanna M.C."/>
            <person name="Nguyen D.T."/>
            <person name="Saudek D.M."/>
            <person name="Brandon R.C."/>
            <person name="Fine L.D."/>
            <person name="Fritchman J.L."/>
            <person name="Fuhrmann J.L."/>
            <person name="Geoghagen N.S.M."/>
            <person name="Gnehm C.L."/>
            <person name="McDonald L.A."/>
            <person name="Small K.V."/>
            <person name="Fraser C.M."/>
            <person name="Smith H.O."/>
            <person name="Venter J.C."/>
        </authorList>
    </citation>
    <scope>NUCLEOTIDE SEQUENCE [LARGE SCALE GENOMIC DNA]</scope>
    <source>
        <strain>ATCC 51907 / DSM 11121 / KW20 / Rd</strain>
    </source>
</reference>
<feature type="chain" id="PRO_0000055104" description="ATP-dependent RNA helicase DeaD">
    <location>
        <begin position="1"/>
        <end position="613"/>
    </location>
</feature>
<feature type="domain" description="Helicase ATP-binding" evidence="1">
    <location>
        <begin position="36"/>
        <end position="207"/>
    </location>
</feature>
<feature type="domain" description="Helicase C-terminal" evidence="1">
    <location>
        <begin position="231"/>
        <end position="378"/>
    </location>
</feature>
<feature type="region of interest" description="Disordered" evidence="2">
    <location>
        <begin position="434"/>
        <end position="476"/>
    </location>
</feature>
<feature type="region of interest" description="Disordered" evidence="2">
    <location>
        <begin position="552"/>
        <end position="613"/>
    </location>
</feature>
<feature type="short sequence motif" description="Q motif">
    <location>
        <begin position="5"/>
        <end position="33"/>
    </location>
</feature>
<feature type="short sequence motif" description="DEAD box">
    <location>
        <begin position="155"/>
        <end position="158"/>
    </location>
</feature>
<feature type="compositionally biased region" description="Basic and acidic residues" evidence="2">
    <location>
        <begin position="440"/>
        <end position="469"/>
    </location>
</feature>
<feature type="compositionally biased region" description="Basic and acidic residues" evidence="2">
    <location>
        <begin position="556"/>
        <end position="613"/>
    </location>
</feature>
<feature type="binding site" evidence="1">
    <location>
        <begin position="49"/>
        <end position="56"/>
    </location>
    <ligand>
        <name>ATP</name>
        <dbReference type="ChEBI" id="CHEBI:30616"/>
    </ligand>
</feature>
<dbReference type="EC" id="3.6.4.13" evidence="1"/>
<dbReference type="EMBL" id="L42023">
    <property type="protein sequence ID" value="AAC21900.1"/>
    <property type="molecule type" value="Genomic_DNA"/>
</dbReference>
<dbReference type="PIR" id="F64056">
    <property type="entry name" value="F64056"/>
</dbReference>
<dbReference type="RefSeq" id="NP_438403.1">
    <property type="nucleotide sequence ID" value="NC_000907.1"/>
</dbReference>
<dbReference type="SMR" id="P44586"/>
<dbReference type="STRING" id="71421.HI_0231"/>
<dbReference type="EnsemblBacteria" id="AAC21900">
    <property type="protein sequence ID" value="AAC21900"/>
    <property type="gene ID" value="HI_0231"/>
</dbReference>
<dbReference type="KEGG" id="hin:HI_0231"/>
<dbReference type="PATRIC" id="fig|71421.8.peg.245"/>
<dbReference type="eggNOG" id="COG0513">
    <property type="taxonomic scope" value="Bacteria"/>
</dbReference>
<dbReference type="HOGENOM" id="CLU_003041_21_1_6"/>
<dbReference type="OrthoDB" id="9805696at2"/>
<dbReference type="PhylomeDB" id="P44586"/>
<dbReference type="BioCyc" id="HINF71421:G1GJ1-248-MONOMER"/>
<dbReference type="Proteomes" id="UP000000579">
    <property type="component" value="Chromosome"/>
</dbReference>
<dbReference type="GO" id="GO:0005829">
    <property type="term" value="C:cytosol"/>
    <property type="evidence" value="ECO:0000318"/>
    <property type="project" value="GO_Central"/>
</dbReference>
<dbReference type="GO" id="GO:0005524">
    <property type="term" value="F:ATP binding"/>
    <property type="evidence" value="ECO:0007669"/>
    <property type="project" value="UniProtKB-UniRule"/>
</dbReference>
<dbReference type="GO" id="GO:0016887">
    <property type="term" value="F:ATP hydrolysis activity"/>
    <property type="evidence" value="ECO:0007669"/>
    <property type="project" value="RHEA"/>
</dbReference>
<dbReference type="GO" id="GO:0003724">
    <property type="term" value="F:RNA helicase activity"/>
    <property type="evidence" value="ECO:0000318"/>
    <property type="project" value="GO_Central"/>
</dbReference>
<dbReference type="GO" id="GO:0033592">
    <property type="term" value="F:RNA strand annealing activity"/>
    <property type="evidence" value="ECO:0000318"/>
    <property type="project" value="GO_Central"/>
</dbReference>
<dbReference type="GO" id="GO:0070417">
    <property type="term" value="P:cellular response to cold"/>
    <property type="evidence" value="ECO:0007669"/>
    <property type="project" value="InterPro"/>
</dbReference>
<dbReference type="GO" id="GO:0009409">
    <property type="term" value="P:response to cold"/>
    <property type="evidence" value="ECO:0000318"/>
    <property type="project" value="GO_Central"/>
</dbReference>
<dbReference type="GO" id="GO:0000027">
    <property type="term" value="P:ribosomal large subunit assembly"/>
    <property type="evidence" value="ECO:0007669"/>
    <property type="project" value="UniProtKB-UniRule"/>
</dbReference>
<dbReference type="GO" id="GO:0006401">
    <property type="term" value="P:RNA catabolic process"/>
    <property type="evidence" value="ECO:0007669"/>
    <property type="project" value="UniProtKB-UniRule"/>
</dbReference>
<dbReference type="CDD" id="cd00268">
    <property type="entry name" value="DEADc"/>
    <property type="match status" value="1"/>
</dbReference>
<dbReference type="CDD" id="cd12499">
    <property type="entry name" value="RRM_EcCsdA_like"/>
    <property type="match status" value="1"/>
</dbReference>
<dbReference type="CDD" id="cd18787">
    <property type="entry name" value="SF2_C_DEAD"/>
    <property type="match status" value="1"/>
</dbReference>
<dbReference type="FunFam" id="3.30.70.330:FF:000068">
    <property type="entry name" value="ATP-dependent RNA helicase DeaD"/>
    <property type="match status" value="1"/>
</dbReference>
<dbReference type="FunFam" id="3.40.50.300:FF:000374">
    <property type="entry name" value="ATP-dependent RNA helicase DeaD"/>
    <property type="match status" value="1"/>
</dbReference>
<dbReference type="FunFam" id="3.40.50.300:FF:000108">
    <property type="entry name" value="ATP-dependent RNA helicase RhlE"/>
    <property type="match status" value="1"/>
</dbReference>
<dbReference type="Gene3D" id="3.30.70.330">
    <property type="match status" value="1"/>
</dbReference>
<dbReference type="Gene3D" id="3.40.50.300">
    <property type="entry name" value="P-loop containing nucleotide triphosphate hydrolases"/>
    <property type="match status" value="2"/>
</dbReference>
<dbReference type="HAMAP" id="MF_00964">
    <property type="entry name" value="DEAD_helicase_DeaD"/>
    <property type="match status" value="1"/>
</dbReference>
<dbReference type="InterPro" id="IPR034415">
    <property type="entry name" value="CsdA_RRM"/>
</dbReference>
<dbReference type="InterPro" id="IPR005580">
    <property type="entry name" value="DbpA/CsdA_RNA-bd_dom"/>
</dbReference>
<dbReference type="InterPro" id="IPR011545">
    <property type="entry name" value="DEAD/DEAH_box_helicase_dom"/>
</dbReference>
<dbReference type="InterPro" id="IPR050547">
    <property type="entry name" value="DEAD_box_RNA_helicases"/>
</dbReference>
<dbReference type="InterPro" id="IPR028618">
    <property type="entry name" value="DEAD_helicase_DeaD"/>
</dbReference>
<dbReference type="InterPro" id="IPR014001">
    <property type="entry name" value="Helicase_ATP-bd"/>
</dbReference>
<dbReference type="InterPro" id="IPR001650">
    <property type="entry name" value="Helicase_C-like"/>
</dbReference>
<dbReference type="InterPro" id="IPR012677">
    <property type="entry name" value="Nucleotide-bd_a/b_plait_sf"/>
</dbReference>
<dbReference type="InterPro" id="IPR027417">
    <property type="entry name" value="P-loop_NTPase"/>
</dbReference>
<dbReference type="InterPro" id="IPR000629">
    <property type="entry name" value="RNA-helicase_DEAD-box_CS"/>
</dbReference>
<dbReference type="InterPro" id="IPR014014">
    <property type="entry name" value="RNA_helicase_DEAD_Q_motif"/>
</dbReference>
<dbReference type="PANTHER" id="PTHR47963:SF8">
    <property type="entry name" value="ATP-DEPENDENT RNA HELICASE DEAD"/>
    <property type="match status" value="1"/>
</dbReference>
<dbReference type="PANTHER" id="PTHR47963">
    <property type="entry name" value="DEAD-BOX ATP-DEPENDENT RNA HELICASE 47, MITOCHONDRIAL"/>
    <property type="match status" value="1"/>
</dbReference>
<dbReference type="Pfam" id="PF03880">
    <property type="entry name" value="DbpA"/>
    <property type="match status" value="1"/>
</dbReference>
<dbReference type="Pfam" id="PF00270">
    <property type="entry name" value="DEAD"/>
    <property type="match status" value="1"/>
</dbReference>
<dbReference type="Pfam" id="PF25399">
    <property type="entry name" value="DeaD_dimer"/>
    <property type="match status" value="1"/>
</dbReference>
<dbReference type="Pfam" id="PF00271">
    <property type="entry name" value="Helicase_C"/>
    <property type="match status" value="1"/>
</dbReference>
<dbReference type="SMART" id="SM00487">
    <property type="entry name" value="DEXDc"/>
    <property type="match status" value="1"/>
</dbReference>
<dbReference type="SMART" id="SM00490">
    <property type="entry name" value="HELICc"/>
    <property type="match status" value="1"/>
</dbReference>
<dbReference type="SUPFAM" id="SSF52540">
    <property type="entry name" value="P-loop containing nucleoside triphosphate hydrolases"/>
    <property type="match status" value="1"/>
</dbReference>
<dbReference type="PROSITE" id="PS00039">
    <property type="entry name" value="DEAD_ATP_HELICASE"/>
    <property type="match status" value="1"/>
</dbReference>
<dbReference type="PROSITE" id="PS51192">
    <property type="entry name" value="HELICASE_ATP_BIND_1"/>
    <property type="match status" value="1"/>
</dbReference>
<dbReference type="PROSITE" id="PS51194">
    <property type="entry name" value="HELICASE_CTER"/>
    <property type="match status" value="1"/>
</dbReference>
<dbReference type="PROSITE" id="PS51195">
    <property type="entry name" value="Q_MOTIF"/>
    <property type="match status" value="1"/>
</dbReference>
<gene>
    <name evidence="1" type="primary">deaD</name>
    <name evidence="1" type="synonym">csdA</name>
    <name type="ordered locus">HI_0231</name>
</gene>
<comment type="function">
    <text evidence="1">DEAD-box RNA helicase involved in various cellular processes at low temperature, including ribosome biogenesis, mRNA degradation and translation initiation.</text>
</comment>
<comment type="catalytic activity">
    <reaction evidence="1">
        <text>ATP + H2O = ADP + phosphate + H(+)</text>
        <dbReference type="Rhea" id="RHEA:13065"/>
        <dbReference type="ChEBI" id="CHEBI:15377"/>
        <dbReference type="ChEBI" id="CHEBI:15378"/>
        <dbReference type="ChEBI" id="CHEBI:30616"/>
        <dbReference type="ChEBI" id="CHEBI:43474"/>
        <dbReference type="ChEBI" id="CHEBI:456216"/>
        <dbReference type="EC" id="3.6.4.13"/>
    </reaction>
</comment>
<comment type="subcellular location">
    <subcellularLocation>
        <location evidence="1">Cytoplasm</location>
    </subcellularLocation>
</comment>
<comment type="similarity">
    <text evidence="1">Belongs to the DEAD box helicase family. DeaD/CsdA subfamily.</text>
</comment>
<proteinExistence type="inferred from homology"/>
<protein>
    <recommendedName>
        <fullName evidence="1">ATP-dependent RNA helicase DeaD</fullName>
        <ecNumber evidence="1">3.6.4.13</ecNumber>
    </recommendedName>
    <alternativeName>
        <fullName evidence="1">Cold-shock DEAD box protein A</fullName>
    </alternativeName>
</protein>